<evidence type="ECO:0000255" key="1">
    <source>
        <dbReference type="HAMAP-Rule" id="MF_01846"/>
    </source>
</evidence>
<proteinExistence type="inferred from homology"/>
<keyword id="KW-0378">Hydrolase</keyword>
<keyword id="KW-0460">Magnesium</keyword>
<keyword id="KW-1185">Reference proteome</keyword>
<feature type="chain" id="PRO_0000342143" description="Nucleoside triphosphatase NudI">
    <location>
        <begin position="1"/>
        <end position="141"/>
    </location>
</feature>
<feature type="domain" description="Nudix hydrolase" evidence="1">
    <location>
        <begin position="1"/>
        <end position="141"/>
    </location>
</feature>
<feature type="short sequence motif" description="Nudix box">
    <location>
        <begin position="38"/>
        <end position="59"/>
    </location>
</feature>
<organism>
    <name type="scientific">Shigella sonnei (strain Ss046)</name>
    <dbReference type="NCBI Taxonomy" id="300269"/>
    <lineage>
        <taxon>Bacteria</taxon>
        <taxon>Pseudomonadati</taxon>
        <taxon>Pseudomonadota</taxon>
        <taxon>Gammaproteobacteria</taxon>
        <taxon>Enterobacterales</taxon>
        <taxon>Enterobacteriaceae</taxon>
        <taxon>Shigella</taxon>
    </lineage>
</organism>
<protein>
    <recommendedName>
        <fullName evidence="1">Nucleoside triphosphatase NudI</fullName>
        <ecNumber evidence="1">3.6.1.9</ecNumber>
    </recommendedName>
    <alternativeName>
        <fullName evidence="1">Nucleotide diphosphatase NudI</fullName>
    </alternativeName>
    <alternativeName>
        <fullName evidence="1">Pyrimidine deoxynucleoside triphosphate diphosphatase</fullName>
    </alternativeName>
    <alternativeName>
        <fullName evidence="1">dCTP diphosphatase</fullName>
        <ecNumber evidence="1">3.6.1.12</ecNumber>
    </alternativeName>
    <alternativeName>
        <fullName evidence="1">dTTP diphosphatase</fullName>
        <ecNumber evidence="1">3.6.1.-</ecNumber>
    </alternativeName>
    <alternativeName>
        <fullName evidence="1">dUTP diphosphatase</fullName>
        <ecNumber evidence="1">3.6.1.23</ecNumber>
    </alternativeName>
</protein>
<comment type="function">
    <text evidence="1">Catalyzes the hydrolysis of nucleoside triphosphates, with a preference for pyrimidine deoxynucleoside triphosphates (dUTP, dTTP and dCTP).</text>
</comment>
<comment type="catalytic activity">
    <reaction evidence="1">
        <text>a ribonucleoside 5'-triphosphate + H2O = a ribonucleoside 5'-phosphate + diphosphate + H(+)</text>
        <dbReference type="Rhea" id="RHEA:23996"/>
        <dbReference type="ChEBI" id="CHEBI:15377"/>
        <dbReference type="ChEBI" id="CHEBI:15378"/>
        <dbReference type="ChEBI" id="CHEBI:33019"/>
        <dbReference type="ChEBI" id="CHEBI:58043"/>
        <dbReference type="ChEBI" id="CHEBI:61557"/>
        <dbReference type="EC" id="3.6.1.9"/>
    </reaction>
</comment>
<comment type="catalytic activity">
    <reaction evidence="1">
        <text>a 2'-deoxyribonucleoside 5'-triphosphate + H2O = a 2'-deoxyribonucleoside 5'-phosphate + diphosphate + H(+)</text>
        <dbReference type="Rhea" id="RHEA:44644"/>
        <dbReference type="ChEBI" id="CHEBI:15377"/>
        <dbReference type="ChEBI" id="CHEBI:15378"/>
        <dbReference type="ChEBI" id="CHEBI:33019"/>
        <dbReference type="ChEBI" id="CHEBI:61560"/>
        <dbReference type="ChEBI" id="CHEBI:65317"/>
        <dbReference type="EC" id="3.6.1.9"/>
    </reaction>
</comment>
<comment type="catalytic activity">
    <reaction evidence="1">
        <text>dUTP + H2O = dUMP + diphosphate + H(+)</text>
        <dbReference type="Rhea" id="RHEA:10248"/>
        <dbReference type="ChEBI" id="CHEBI:15377"/>
        <dbReference type="ChEBI" id="CHEBI:15378"/>
        <dbReference type="ChEBI" id="CHEBI:33019"/>
        <dbReference type="ChEBI" id="CHEBI:61555"/>
        <dbReference type="ChEBI" id="CHEBI:246422"/>
        <dbReference type="EC" id="3.6.1.9"/>
    </reaction>
</comment>
<comment type="catalytic activity">
    <reaction evidence="1">
        <text>dUTP + H2O = dUMP + diphosphate + H(+)</text>
        <dbReference type="Rhea" id="RHEA:10248"/>
        <dbReference type="ChEBI" id="CHEBI:15377"/>
        <dbReference type="ChEBI" id="CHEBI:15378"/>
        <dbReference type="ChEBI" id="CHEBI:33019"/>
        <dbReference type="ChEBI" id="CHEBI:61555"/>
        <dbReference type="ChEBI" id="CHEBI:246422"/>
        <dbReference type="EC" id="3.6.1.23"/>
    </reaction>
</comment>
<comment type="catalytic activity">
    <reaction evidence="1">
        <text>dTTP + H2O = dTMP + diphosphate + H(+)</text>
        <dbReference type="Rhea" id="RHEA:28534"/>
        <dbReference type="ChEBI" id="CHEBI:15377"/>
        <dbReference type="ChEBI" id="CHEBI:15378"/>
        <dbReference type="ChEBI" id="CHEBI:33019"/>
        <dbReference type="ChEBI" id="CHEBI:37568"/>
        <dbReference type="ChEBI" id="CHEBI:63528"/>
        <dbReference type="EC" id="3.6.1.9"/>
    </reaction>
</comment>
<comment type="catalytic activity">
    <reaction evidence="1">
        <text>dCTP + H2O = dCMP + diphosphate + H(+)</text>
        <dbReference type="Rhea" id="RHEA:22636"/>
        <dbReference type="ChEBI" id="CHEBI:15377"/>
        <dbReference type="ChEBI" id="CHEBI:15378"/>
        <dbReference type="ChEBI" id="CHEBI:33019"/>
        <dbReference type="ChEBI" id="CHEBI:57566"/>
        <dbReference type="ChEBI" id="CHEBI:61481"/>
        <dbReference type="EC" id="3.6.1.9"/>
    </reaction>
</comment>
<comment type="catalytic activity">
    <reaction evidence="1">
        <text>dCTP + H2O = dCMP + diphosphate + H(+)</text>
        <dbReference type="Rhea" id="RHEA:22636"/>
        <dbReference type="ChEBI" id="CHEBI:15377"/>
        <dbReference type="ChEBI" id="CHEBI:15378"/>
        <dbReference type="ChEBI" id="CHEBI:33019"/>
        <dbReference type="ChEBI" id="CHEBI:57566"/>
        <dbReference type="ChEBI" id="CHEBI:61481"/>
        <dbReference type="EC" id="3.6.1.12"/>
    </reaction>
</comment>
<comment type="cofactor">
    <cofactor evidence="1">
        <name>Mg(2+)</name>
        <dbReference type="ChEBI" id="CHEBI:18420"/>
    </cofactor>
</comment>
<comment type="subunit">
    <text evidence="1">Monomer.</text>
</comment>
<comment type="similarity">
    <text evidence="1">Belongs to the Nudix hydrolase family. NudI subfamily.</text>
</comment>
<accession>Q3YZV5</accession>
<name>NUDI_SHISS</name>
<dbReference type="EC" id="3.6.1.9" evidence="1"/>
<dbReference type="EC" id="3.6.1.12" evidence="1"/>
<dbReference type="EC" id="3.6.1.-" evidence="1"/>
<dbReference type="EC" id="3.6.1.23" evidence="1"/>
<dbReference type="EMBL" id="CP000038">
    <property type="protein sequence ID" value="AAZ88957.1"/>
    <property type="molecule type" value="Genomic_DNA"/>
</dbReference>
<dbReference type="RefSeq" id="WP_001249889.1">
    <property type="nucleotide sequence ID" value="NC_007384.1"/>
</dbReference>
<dbReference type="SMR" id="Q3YZV5"/>
<dbReference type="GeneID" id="93774923"/>
<dbReference type="KEGG" id="ssn:SSON_2312"/>
<dbReference type="HOGENOM" id="CLU_037162_31_0_6"/>
<dbReference type="Proteomes" id="UP000002529">
    <property type="component" value="Chromosome"/>
</dbReference>
<dbReference type="GO" id="GO:0047840">
    <property type="term" value="F:dCTP diphosphatase activity"/>
    <property type="evidence" value="ECO:0007669"/>
    <property type="project" value="UniProtKB-EC"/>
</dbReference>
<dbReference type="GO" id="GO:0036218">
    <property type="term" value="F:dTTP diphosphatase activity"/>
    <property type="evidence" value="ECO:0007669"/>
    <property type="project" value="RHEA"/>
</dbReference>
<dbReference type="GO" id="GO:0004170">
    <property type="term" value="F:dUTP diphosphatase activity"/>
    <property type="evidence" value="ECO:0007669"/>
    <property type="project" value="UniProtKB-EC"/>
</dbReference>
<dbReference type="GO" id="GO:0000287">
    <property type="term" value="F:magnesium ion binding"/>
    <property type="evidence" value="ECO:0007669"/>
    <property type="project" value="UniProtKB-UniRule"/>
</dbReference>
<dbReference type="FunFam" id="3.90.79.10:FF:000039">
    <property type="entry name" value="Nucleoside triphosphatase NudI"/>
    <property type="match status" value="1"/>
</dbReference>
<dbReference type="Gene3D" id="3.90.79.10">
    <property type="entry name" value="Nucleoside Triphosphate Pyrophosphohydrolase"/>
    <property type="match status" value="1"/>
</dbReference>
<dbReference type="HAMAP" id="MF_01846">
    <property type="entry name" value="Nudix_NudI"/>
    <property type="match status" value="1"/>
</dbReference>
<dbReference type="InterPro" id="IPR023781">
    <property type="entry name" value="Nucleoside_triphosphatase_NudI"/>
</dbReference>
<dbReference type="InterPro" id="IPR020476">
    <property type="entry name" value="Nudix_hydrolase"/>
</dbReference>
<dbReference type="InterPro" id="IPR015797">
    <property type="entry name" value="NUDIX_hydrolase-like_dom_sf"/>
</dbReference>
<dbReference type="InterPro" id="IPR020084">
    <property type="entry name" value="NUDIX_hydrolase_CS"/>
</dbReference>
<dbReference type="InterPro" id="IPR000086">
    <property type="entry name" value="NUDIX_hydrolase_dom"/>
</dbReference>
<dbReference type="NCBIfam" id="NF012016">
    <property type="entry name" value="PRK15472.1"/>
    <property type="match status" value="1"/>
</dbReference>
<dbReference type="PANTHER" id="PTHR43046">
    <property type="entry name" value="GDP-MANNOSE MANNOSYL HYDROLASE"/>
    <property type="match status" value="1"/>
</dbReference>
<dbReference type="PANTHER" id="PTHR43046:SF14">
    <property type="entry name" value="MUTT_NUDIX FAMILY PROTEIN"/>
    <property type="match status" value="1"/>
</dbReference>
<dbReference type="Pfam" id="PF00293">
    <property type="entry name" value="NUDIX"/>
    <property type="match status" value="1"/>
</dbReference>
<dbReference type="PRINTS" id="PR00502">
    <property type="entry name" value="NUDIXFAMILY"/>
</dbReference>
<dbReference type="SUPFAM" id="SSF55811">
    <property type="entry name" value="Nudix"/>
    <property type="match status" value="1"/>
</dbReference>
<dbReference type="PROSITE" id="PS51462">
    <property type="entry name" value="NUDIX"/>
    <property type="match status" value="1"/>
</dbReference>
<dbReference type="PROSITE" id="PS00893">
    <property type="entry name" value="NUDIX_BOX"/>
    <property type="match status" value="1"/>
</dbReference>
<gene>
    <name evidence="1" type="primary">nudI</name>
    <name type="ordered locus">SSON_2312</name>
</gene>
<reference key="1">
    <citation type="journal article" date="2005" name="Nucleic Acids Res.">
        <title>Genome dynamics and diversity of Shigella species, the etiologic agents of bacillary dysentery.</title>
        <authorList>
            <person name="Yang F."/>
            <person name="Yang J."/>
            <person name="Zhang X."/>
            <person name="Chen L."/>
            <person name="Jiang Y."/>
            <person name="Yan Y."/>
            <person name="Tang X."/>
            <person name="Wang J."/>
            <person name="Xiong Z."/>
            <person name="Dong J."/>
            <person name="Xue Y."/>
            <person name="Zhu Y."/>
            <person name="Xu X."/>
            <person name="Sun L."/>
            <person name="Chen S."/>
            <person name="Nie H."/>
            <person name="Peng J."/>
            <person name="Xu J."/>
            <person name="Wang Y."/>
            <person name="Yuan Z."/>
            <person name="Wen Y."/>
            <person name="Yao Z."/>
            <person name="Shen Y."/>
            <person name="Qiang B."/>
            <person name="Hou Y."/>
            <person name="Yu J."/>
            <person name="Jin Q."/>
        </authorList>
    </citation>
    <scope>NUCLEOTIDE SEQUENCE [LARGE SCALE GENOMIC DNA]</scope>
    <source>
        <strain>Ss046</strain>
    </source>
</reference>
<sequence>MRQRTIVCPLIQNDGAYLLCKMADDRGVFPGQWALSGGGVESGERIEEALRREIREELGEQLLLTEITPWTFSDDIRTKTYADGRKEEIYMIYLIFDCVSANREVKINEEFQDYAWVKPEDLVHYDLNVATRKTLRLKGLL</sequence>